<reference key="1">
    <citation type="journal article" date="2008" name="J. Bacteriol.">
        <title>The complete genome sequence of Escherichia coli DH10B: insights into the biology of a laboratory workhorse.</title>
        <authorList>
            <person name="Durfee T."/>
            <person name="Nelson R."/>
            <person name="Baldwin S."/>
            <person name="Plunkett G. III"/>
            <person name="Burland V."/>
            <person name="Mau B."/>
            <person name="Petrosino J.F."/>
            <person name="Qin X."/>
            <person name="Muzny D.M."/>
            <person name="Ayele M."/>
            <person name="Gibbs R.A."/>
            <person name="Csorgo B."/>
            <person name="Posfai G."/>
            <person name="Weinstock G.M."/>
            <person name="Blattner F.R."/>
        </authorList>
    </citation>
    <scope>NUCLEOTIDE SEQUENCE [LARGE SCALE GENOMIC DNA]</scope>
    <source>
        <strain>K12 / DH10B</strain>
    </source>
</reference>
<organism>
    <name type="scientific">Escherichia coli (strain K12 / DH10B)</name>
    <dbReference type="NCBI Taxonomy" id="316385"/>
    <lineage>
        <taxon>Bacteria</taxon>
        <taxon>Pseudomonadati</taxon>
        <taxon>Pseudomonadota</taxon>
        <taxon>Gammaproteobacteria</taxon>
        <taxon>Enterobacterales</taxon>
        <taxon>Enterobacteriaceae</taxon>
        <taxon>Escherichia</taxon>
    </lineage>
</organism>
<gene>
    <name evidence="1" type="primary">sotB</name>
    <name type="ordered locus">ECDH10B_1659</name>
</gene>
<evidence type="ECO:0000255" key="1">
    <source>
        <dbReference type="HAMAP-Rule" id="MF_00517"/>
    </source>
</evidence>
<protein>
    <recommendedName>
        <fullName evidence="1">Probable sugar efflux transporter</fullName>
    </recommendedName>
</protein>
<comment type="function">
    <text evidence="1">Involved in the efflux of sugars. The physiological role may be the reduction of the intracellular concentration of toxic sugars or sugar metabolites.</text>
</comment>
<comment type="subcellular location">
    <subcellularLocation>
        <location evidence="1">Cell inner membrane</location>
        <topology evidence="1">Multi-pass membrane protein</topology>
    </subcellularLocation>
</comment>
<comment type="similarity">
    <text evidence="1">Belongs to the major facilitator superfamily. SotB (TC 2.A.1.2) family.</text>
</comment>
<name>SOTB_ECODH</name>
<dbReference type="EMBL" id="CP000948">
    <property type="protein sequence ID" value="ACB02737.1"/>
    <property type="molecule type" value="Genomic_DNA"/>
</dbReference>
<dbReference type="SMR" id="B1XEB5"/>
<dbReference type="KEGG" id="ecd:ECDH10B_1659"/>
<dbReference type="HOGENOM" id="CLU_001265_61_1_6"/>
<dbReference type="GO" id="GO:0005886">
    <property type="term" value="C:plasma membrane"/>
    <property type="evidence" value="ECO:0007669"/>
    <property type="project" value="UniProtKB-SubCell"/>
</dbReference>
<dbReference type="GO" id="GO:0015144">
    <property type="term" value="F:carbohydrate transmembrane transporter activity"/>
    <property type="evidence" value="ECO:0007669"/>
    <property type="project" value="UniProtKB-UniRule"/>
</dbReference>
<dbReference type="CDD" id="cd17324">
    <property type="entry name" value="MFS_NepI_like"/>
    <property type="match status" value="1"/>
</dbReference>
<dbReference type="FunFam" id="1.20.1250.20:FF:000079">
    <property type="entry name" value="Probable sugar efflux transporter"/>
    <property type="match status" value="1"/>
</dbReference>
<dbReference type="Gene3D" id="1.20.1250.20">
    <property type="entry name" value="MFS general substrate transporter like domains"/>
    <property type="match status" value="1"/>
</dbReference>
<dbReference type="HAMAP" id="MF_00517">
    <property type="entry name" value="MFS_SotB"/>
    <property type="match status" value="1"/>
</dbReference>
<dbReference type="InterPro" id="IPR011701">
    <property type="entry name" value="MFS"/>
</dbReference>
<dbReference type="InterPro" id="IPR020846">
    <property type="entry name" value="MFS_dom"/>
</dbReference>
<dbReference type="InterPro" id="IPR050189">
    <property type="entry name" value="MFS_Efflux_Transporters"/>
</dbReference>
<dbReference type="InterPro" id="IPR036259">
    <property type="entry name" value="MFS_trans_sf"/>
</dbReference>
<dbReference type="InterPro" id="IPR023495">
    <property type="entry name" value="Sugar_effux_transptr_put"/>
</dbReference>
<dbReference type="NCBIfam" id="NF002921">
    <property type="entry name" value="PRK03545.1"/>
    <property type="match status" value="1"/>
</dbReference>
<dbReference type="PANTHER" id="PTHR43124">
    <property type="entry name" value="PURINE EFFLUX PUMP PBUE"/>
    <property type="match status" value="1"/>
</dbReference>
<dbReference type="PANTHER" id="PTHR43124:SF4">
    <property type="entry name" value="SUGAR EFFLUX TRANSPORTER"/>
    <property type="match status" value="1"/>
</dbReference>
<dbReference type="Pfam" id="PF07690">
    <property type="entry name" value="MFS_1"/>
    <property type="match status" value="1"/>
</dbReference>
<dbReference type="SUPFAM" id="SSF103473">
    <property type="entry name" value="MFS general substrate transporter"/>
    <property type="match status" value="1"/>
</dbReference>
<dbReference type="PROSITE" id="PS50850">
    <property type="entry name" value="MFS"/>
    <property type="match status" value="1"/>
</dbReference>
<feature type="chain" id="PRO_1000127458" description="Probable sugar efflux transporter">
    <location>
        <begin position="1"/>
        <end position="396"/>
    </location>
</feature>
<feature type="transmembrane region" description="Helical" evidence="1">
    <location>
        <begin position="15"/>
        <end position="35"/>
    </location>
</feature>
<feature type="transmembrane region" description="Helical" evidence="1">
    <location>
        <begin position="50"/>
        <end position="70"/>
    </location>
</feature>
<feature type="transmembrane region" description="Helical" evidence="1">
    <location>
        <begin position="81"/>
        <end position="101"/>
    </location>
</feature>
<feature type="transmembrane region" description="Helical" evidence="1">
    <location>
        <begin position="103"/>
        <end position="123"/>
    </location>
</feature>
<feature type="transmembrane region" description="Helical" evidence="1">
    <location>
        <begin position="136"/>
        <end position="156"/>
    </location>
</feature>
<feature type="transmembrane region" description="Helical" evidence="1">
    <location>
        <begin position="170"/>
        <end position="190"/>
    </location>
</feature>
<feature type="transmembrane region" description="Helical" evidence="1">
    <location>
        <begin position="209"/>
        <end position="229"/>
    </location>
</feature>
<feature type="transmembrane region" description="Helical" evidence="1">
    <location>
        <begin position="246"/>
        <end position="266"/>
    </location>
</feature>
<feature type="transmembrane region" description="Helical" evidence="1">
    <location>
        <begin position="275"/>
        <end position="295"/>
    </location>
</feature>
<feature type="transmembrane region" description="Helical" evidence="1">
    <location>
        <begin position="299"/>
        <end position="319"/>
    </location>
</feature>
<feature type="transmembrane region" description="Helical" evidence="1">
    <location>
        <begin position="333"/>
        <end position="353"/>
    </location>
</feature>
<feature type="transmembrane region" description="Helical" evidence="1">
    <location>
        <begin position="364"/>
        <end position="384"/>
    </location>
</feature>
<proteinExistence type="inferred from homology"/>
<keyword id="KW-0997">Cell inner membrane</keyword>
<keyword id="KW-1003">Cell membrane</keyword>
<keyword id="KW-0472">Membrane</keyword>
<keyword id="KW-0762">Sugar transport</keyword>
<keyword id="KW-0812">Transmembrane</keyword>
<keyword id="KW-1133">Transmembrane helix</keyword>
<keyword id="KW-0813">Transport</keyword>
<sequence length="396" mass="42538">MTTNTVSRKVAWLRVVTLAVAAFIFNTTEFVPVGLLSDIAQSFHMQTAQVGIMLTIYAWVVALMSLPFMLMTSQVERRKLLICLFVVFIASHVLSFLSWSFTVLVISRIGVAFAHAIFWSITASLAIRMAPAGKRAQALSLIATGTALAMVLGLPLGRIVGQYFGWRMTFFAIGIGALITLLCLIKLLPLLPSEHSGSLKSLPLLFRRPALMSIYLLTVVVVTAHYTAYSYIEPFVQNIAGFSANFATALLLLLGGAGIIGSVIFGKLGNQYASALVSTAIALLLVCLALLLPAANSEIHLGVLSIFWGIAMMIIGLGMQVKVLALAPDATDVAMALFSGIFNIGIGAGALVGNQVSLHWSMSMIGYVGAVPAFAALIWSIIIFRRWPVTLEEQTQ</sequence>
<accession>B1XEB5</accession>